<gene>
    <name evidence="9" type="primary">eupB</name>
    <name type="ORF">gme12631</name>
</gene>
<protein>
    <recommendedName>
        <fullName evidence="9">FAD-dependent monooxygenase eupB</fullName>
        <ecNumber evidence="11">1.-.-.-</ecNumber>
    </recommendedName>
    <alternativeName>
        <fullName evidence="9">Eupenifeldin biosynthesis cluster protein B</fullName>
    </alternativeName>
</protein>
<evidence type="ECO:0000250" key="1">
    <source>
        <dbReference type="UniProtKB" id="A6T923"/>
    </source>
</evidence>
<evidence type="ECO:0000250" key="2">
    <source>
        <dbReference type="UniProtKB" id="B8M9J8"/>
    </source>
</evidence>
<evidence type="ECO:0000255" key="3"/>
<evidence type="ECO:0000255" key="4">
    <source>
        <dbReference type="PROSITE-ProRule" id="PRU00498"/>
    </source>
</evidence>
<evidence type="ECO:0000269" key="5">
    <source>
    </source>
</evidence>
<evidence type="ECO:0000269" key="6">
    <source>
    </source>
</evidence>
<evidence type="ECO:0000269" key="7">
    <source>
    </source>
</evidence>
<evidence type="ECO:0000269" key="8">
    <source ref="4"/>
</evidence>
<evidence type="ECO:0000303" key="9">
    <source>
    </source>
</evidence>
<evidence type="ECO:0000305" key="10"/>
<evidence type="ECO:0000305" key="11">
    <source>
    </source>
</evidence>
<accession>A0A4V1E8I5</accession>
<reference key="1">
    <citation type="journal article" date="2019" name="Fungal Genet. Biol.">
        <title>Identification of the gene cluster for bistropolone-humulene meroterpenoid biosynthesis in Phoma sp.</title>
        <authorList>
            <person name="Zhai Y."/>
            <person name="Li Y."/>
            <person name="Zhang J."/>
            <person name="Zhang Y."/>
            <person name="Ren F."/>
            <person name="Zhang X."/>
            <person name="Liu G."/>
            <person name="Liu X."/>
            <person name="Che Y."/>
        </authorList>
    </citation>
    <scope>NUCLEOTIDE SEQUENCE [GENOMIC DNA]</scope>
    <scope>FUNCTION</scope>
    <scope>DISRUPTION PHENOTYPE</scope>
    <scope>PATHWAY</scope>
    <source>
        <strain>XZ068 / CGMCC No. 10481</strain>
    </source>
</reference>
<reference key="2">
    <citation type="journal article" date="1993" name="J. Antibiot.">
        <title>Eupenifeldin, a novel cytotoxic bistropolone from Eupenicillium brefeldianum.</title>
        <authorList>
            <person name="Mayerl F."/>
            <person name="Gao Q."/>
            <person name="Huang S."/>
            <person name="Klohr S.E."/>
            <person name="Matson J.A."/>
            <person name="Gustavson D.R."/>
            <person name="Pirnik D.M."/>
            <person name="Berry R.L."/>
            <person name="Fairchild C."/>
            <person name="Rose W.C."/>
        </authorList>
    </citation>
    <scope>BIOTECHNOLOGY</scope>
</reference>
<reference key="3">
    <citation type="journal article" date="2008" name="J. Nat. Prod.">
        <title>Noreupenifeldin, a tropolone from an unidentified ascomycete.</title>
        <authorList>
            <person name="Ayers S."/>
            <person name="Zink D.L."/>
            <person name="Powell J.S."/>
            <person name="Brown C.M."/>
            <person name="Grund A."/>
            <person name="Bills G.F."/>
            <person name="Platas G."/>
            <person name="Thompson D."/>
            <person name="Singh S.B."/>
        </authorList>
    </citation>
    <scope>BIOTECHNOLOGY</scope>
</reference>
<reference key="4">
    <citation type="journal article" date="2008" name="Phytochem. Lett.">
        <title>Ramiferin, a bisphenol-sesquiterpene from the fungus Kionochaeta ramifera BCC 7585.</title>
        <authorList>
            <person name="Bunyapaiboonsri T."/>
            <person name="Veeranondha S."/>
            <person name="Boonruangprapa T."/>
            <person name="Somrithipol S."/>
        </authorList>
    </citation>
    <scope>BIOTECHNOLOGY</scope>
</reference>
<keyword id="KW-0274">FAD</keyword>
<keyword id="KW-0285">Flavoprotein</keyword>
<keyword id="KW-0325">Glycoprotein</keyword>
<keyword id="KW-0472">Membrane</keyword>
<keyword id="KW-0503">Monooxygenase</keyword>
<keyword id="KW-0560">Oxidoreductase</keyword>
<keyword id="KW-0812">Transmembrane</keyword>
<keyword id="KW-1133">Transmembrane helix</keyword>
<feature type="chain" id="PRO_0000449151" description="FAD-dependent monooxygenase eupB">
    <location>
        <begin position="1"/>
        <end position="446"/>
    </location>
</feature>
<feature type="transmembrane region" description="Helical" evidence="3">
    <location>
        <begin position="10"/>
        <end position="30"/>
    </location>
</feature>
<feature type="active site" evidence="2">
    <location>
        <position position="206"/>
    </location>
</feature>
<feature type="active site" evidence="2">
    <location>
        <position position="239"/>
    </location>
</feature>
<feature type="binding site" evidence="2">
    <location>
        <position position="40"/>
    </location>
    <ligand>
        <name>FAD</name>
        <dbReference type="ChEBI" id="CHEBI:57692"/>
    </ligand>
</feature>
<feature type="binding site" evidence="2">
    <location>
        <position position="53"/>
    </location>
    <ligand>
        <name>FAD</name>
        <dbReference type="ChEBI" id="CHEBI:57692"/>
    </ligand>
</feature>
<feature type="binding site" evidence="2">
    <location>
        <position position="125"/>
    </location>
    <ligand>
        <name>FAD</name>
        <dbReference type="ChEBI" id="CHEBI:57692"/>
    </ligand>
</feature>
<feature type="binding site" evidence="2">
    <location>
        <position position="322"/>
    </location>
    <ligand>
        <name>FAD</name>
        <dbReference type="ChEBI" id="CHEBI:57692"/>
    </ligand>
</feature>
<feature type="binding site" evidence="2">
    <location>
        <position position="335"/>
    </location>
    <ligand>
        <name>FAD</name>
        <dbReference type="ChEBI" id="CHEBI:57692"/>
    </ligand>
</feature>
<feature type="glycosylation site" description="N-linked (GlcNAc...) asparagine" evidence="4">
    <location>
        <position position="33"/>
    </location>
</feature>
<feature type="glycosylation site" description="N-linked (GlcNAc...) asparagine" evidence="4">
    <location>
        <position position="243"/>
    </location>
</feature>
<feature type="glycosylation site" description="N-linked (GlcNAc...) asparagine" evidence="4">
    <location>
        <position position="395"/>
    </location>
</feature>
<dbReference type="EC" id="1.-.-.-" evidence="11"/>
<dbReference type="EMBL" id="MK400120">
    <property type="protein sequence ID" value="QCO93109.1"/>
    <property type="molecule type" value="Genomic_DNA"/>
</dbReference>
<dbReference type="SMR" id="A0A4V1E8I5"/>
<dbReference type="GlyCosmos" id="A0A4V1E8I5">
    <property type="glycosylation" value="3 sites, No reported glycans"/>
</dbReference>
<dbReference type="UniPathway" id="UPA00213"/>
<dbReference type="GO" id="GO:0016020">
    <property type="term" value="C:membrane"/>
    <property type="evidence" value="ECO:0007669"/>
    <property type="project" value="UniProtKB-SubCell"/>
</dbReference>
<dbReference type="GO" id="GO:0071949">
    <property type="term" value="F:FAD binding"/>
    <property type="evidence" value="ECO:0007669"/>
    <property type="project" value="InterPro"/>
</dbReference>
<dbReference type="GO" id="GO:0004497">
    <property type="term" value="F:monooxygenase activity"/>
    <property type="evidence" value="ECO:0007669"/>
    <property type="project" value="UniProtKB-KW"/>
</dbReference>
<dbReference type="GO" id="GO:0044550">
    <property type="term" value="P:secondary metabolite biosynthetic process"/>
    <property type="evidence" value="ECO:0007669"/>
    <property type="project" value="TreeGrafter"/>
</dbReference>
<dbReference type="GO" id="GO:0016114">
    <property type="term" value="P:terpenoid biosynthetic process"/>
    <property type="evidence" value="ECO:0007669"/>
    <property type="project" value="UniProtKB-UniPathway"/>
</dbReference>
<dbReference type="FunFam" id="3.50.50.60:FF:000153">
    <property type="entry name" value="Salicylate hydroxylase, putative"/>
    <property type="match status" value="1"/>
</dbReference>
<dbReference type="Gene3D" id="3.50.50.60">
    <property type="entry name" value="FAD/NAD(P)-binding domain"/>
    <property type="match status" value="1"/>
</dbReference>
<dbReference type="InterPro" id="IPR002938">
    <property type="entry name" value="FAD-bd"/>
</dbReference>
<dbReference type="InterPro" id="IPR036188">
    <property type="entry name" value="FAD/NAD-bd_sf"/>
</dbReference>
<dbReference type="InterPro" id="IPR051104">
    <property type="entry name" value="FAD_monoxygenase"/>
</dbReference>
<dbReference type="PANTHER" id="PTHR46720:SF3">
    <property type="entry name" value="FAD-BINDING DOMAIN-CONTAINING PROTEIN-RELATED"/>
    <property type="match status" value="1"/>
</dbReference>
<dbReference type="PANTHER" id="PTHR46720">
    <property type="entry name" value="HYDROXYLASE, PUTATIVE (AFU_ORTHOLOGUE AFUA_3G01460)-RELATED"/>
    <property type="match status" value="1"/>
</dbReference>
<dbReference type="Pfam" id="PF01494">
    <property type="entry name" value="FAD_binding_3"/>
    <property type="match status" value="1"/>
</dbReference>
<dbReference type="PRINTS" id="PR00420">
    <property type="entry name" value="RNGMNOXGNASE"/>
</dbReference>
<dbReference type="SUPFAM" id="SSF54373">
    <property type="entry name" value="FAD-linked reductases, C-terminal domain"/>
    <property type="match status" value="1"/>
</dbReference>
<dbReference type="SUPFAM" id="SSF51905">
    <property type="entry name" value="FAD/NAD(P)-binding domain"/>
    <property type="match status" value="1"/>
</dbReference>
<sequence>MTIYTFTSSEPHIAIVGGGIVGVILTLGLLRQNVSVRLYEQSAGFREIGAGIAFTASARRCMELMDPAIIDALRRCGAVSVSDKVADEDDHLRWIDGYNQHSKAHPTYQKPLAEICGSGFQGCRRDQLLEELAKHIPSGTIMFHKRLDTIQQGKDHKMILNFVDGSSNQADAVIGCDGIKSRVRQHLFGDNHPASFPQYTHKVAYRGLVPMDRAIEILGTWKAHNFHHHVGPGAHLTHYPVANHTALNVVVFLSDETPWPDSTTMVSKGTRSEVEKALQGWHPTVLGIVNLLPDELSKWALFDQGEFPLPHYSKGRICLAGDAAHASSPHHGAGACLGVEDALCLSTLLSQVRTTLTQADEGSKDKSESSMGQLLEAAFETFNLVRRTRTQWLVNSSRRVCDLYHQQEWADPIRCPKAETCFEEIRDRSYKIWHFDVDGMLEQTRT</sequence>
<name>EUPB_PHOSX</name>
<organism>
    <name type="scientific">Phoma sp</name>
    <dbReference type="NCBI Taxonomy" id="1707701"/>
    <lineage>
        <taxon>Eukaryota</taxon>
        <taxon>Fungi</taxon>
        <taxon>Dikarya</taxon>
        <taxon>Ascomycota</taxon>
        <taxon>Pezizomycotina</taxon>
        <taxon>Dothideomycetes</taxon>
        <taxon>Pleosporomycetidae</taxon>
        <taxon>Pleosporales</taxon>
        <taxon>Pleosporineae</taxon>
        <taxon>Didymellaceae</taxon>
        <taxon>Phoma</taxon>
    </lineage>
</organism>
<comment type="function">
    <text evidence="6 11">FAD-dependent monooxygenase; part of the gene cluster that mediates the biosynthesis of eupenifeldin, a bistropolone meroterpenoid that acts as an antitumor agent (PubMed:30980906). The first step of eupenifeldin biosynthesis is the biosynthesis of 3-methylorcinaldehyde performed by the non-reducing polyketide synthase eupA (PubMed:30980906). Oxidative dearomatization of 3-methylorcinaldehyde likely catalyzed by the FAD-dependent monooxygenase eupB is followed by oxidative ring expansion by the 2-oxoglutarate-dependent dioxygenase eupC to provide the first tropolone metabolite, tropolone stipitaldehyde (Probable). In parallel, generation of sesquiterpene alpha-humulene from farnesylpyrophosphate (FPP) is catalyzed by the terpene cyclase eupE (PubMed:30980906). The cytochrome P450 monooxygenase eupD then hydroxylates humulene to humulenol (PubMed:30980906). The putative Diels-Alderase eupF probably catalyzes the formation of the tropolone-humulene skeleton by linking humulenol and the polyketide moiety (Probable). The short-chain dehydrogenase/reductase eupG and the flavin-dependent monooxygenase eupH are also essential for eupenifeldin biosynthesis and are likely the additional decorating enzymes of the tropolone-humulene skeleton to produce final eupenifeldin or derivatives (Probable).</text>
</comment>
<comment type="cofactor">
    <cofactor evidence="1">
        <name>FAD</name>
        <dbReference type="ChEBI" id="CHEBI:57692"/>
    </cofactor>
</comment>
<comment type="pathway">
    <text evidence="6">Secondary metabolite biosynthesis; terpenoid biosynthesis.</text>
</comment>
<comment type="subcellular location">
    <subcellularLocation>
        <location evidence="3">Membrane</location>
        <topology evidence="3">Single-pass membrane protein</topology>
    </subcellularLocation>
</comment>
<comment type="disruption phenotype">
    <text evidence="6">Abolishes the production of eupenifeldin.</text>
</comment>
<comment type="biotechnology">
    <text evidence="5 7 8">Eupenifeldin is a bistropolone-humulene meroterpenoid first discovered as an antitumor and anti-leukemia agent (PubMed:8360103). This metabolite also shows anthelmintic activity against the parasitic worm Hemonchus contortus, anti-malarial activity as well as antifungal activity (PubMed:18095654, Ref.4).</text>
</comment>
<comment type="similarity">
    <text evidence="10">Belongs to the paxM FAD-dependent monooxygenase family.</text>
</comment>
<proteinExistence type="evidence at protein level"/>